<evidence type="ECO:0000255" key="1">
    <source>
        <dbReference type="HAMAP-Rule" id="MF_01416"/>
    </source>
</evidence>
<evidence type="ECO:0000305" key="2"/>
<accession>B0T339</accession>
<name>ATPD_CAUSK</name>
<comment type="function">
    <text evidence="1">F(1)F(0) ATP synthase produces ATP from ADP in the presence of a proton or sodium gradient. F-type ATPases consist of two structural domains, F(1) containing the extramembraneous catalytic core and F(0) containing the membrane proton channel, linked together by a central stalk and a peripheral stalk. During catalysis, ATP synthesis in the catalytic domain of F(1) is coupled via a rotary mechanism of the central stalk subunits to proton translocation.</text>
</comment>
<comment type="function">
    <text evidence="1">This protein is part of the stalk that links CF(0) to CF(1). It either transmits conformational changes from CF(0) to CF(1) or is implicated in proton conduction.</text>
</comment>
<comment type="subunit">
    <text evidence="1">F-type ATPases have 2 components, F(1) - the catalytic core - and F(0) - the membrane proton channel. F(1) has five subunits: alpha(3), beta(3), gamma(1), delta(1), epsilon(1). F(0) has three main subunits: a(1), b(2) and c(10-14). The alpha and beta chains form an alternating ring which encloses part of the gamma chain. F(1) is attached to F(0) by a central stalk formed by the gamma and epsilon chains, while a peripheral stalk is formed by the delta and b chains.</text>
</comment>
<comment type="subcellular location">
    <subcellularLocation>
        <location evidence="1">Cell inner membrane</location>
        <topology evidence="1">Peripheral membrane protein</topology>
    </subcellularLocation>
</comment>
<comment type="similarity">
    <text evidence="1">Belongs to the ATPase delta chain family.</text>
</comment>
<comment type="sequence caution" evidence="2">
    <conflict type="erroneous initiation">
        <sequence resource="EMBL-CDS" id="ABZ73861"/>
    </conflict>
</comment>
<dbReference type="EMBL" id="CP000927">
    <property type="protein sequence ID" value="ABZ73861.1"/>
    <property type="status" value="ALT_INIT"/>
    <property type="molecule type" value="Genomic_DNA"/>
</dbReference>
<dbReference type="SMR" id="B0T339"/>
<dbReference type="STRING" id="366602.Caul_4741"/>
<dbReference type="KEGG" id="cak:Caul_4741"/>
<dbReference type="eggNOG" id="COG0712">
    <property type="taxonomic scope" value="Bacteria"/>
</dbReference>
<dbReference type="HOGENOM" id="CLU_085114_0_1_5"/>
<dbReference type="OrthoDB" id="9796185at2"/>
<dbReference type="GO" id="GO:0005886">
    <property type="term" value="C:plasma membrane"/>
    <property type="evidence" value="ECO:0007669"/>
    <property type="project" value="UniProtKB-SubCell"/>
</dbReference>
<dbReference type="GO" id="GO:0045259">
    <property type="term" value="C:proton-transporting ATP synthase complex"/>
    <property type="evidence" value="ECO:0007669"/>
    <property type="project" value="UniProtKB-KW"/>
</dbReference>
<dbReference type="GO" id="GO:0046933">
    <property type="term" value="F:proton-transporting ATP synthase activity, rotational mechanism"/>
    <property type="evidence" value="ECO:0007669"/>
    <property type="project" value="UniProtKB-UniRule"/>
</dbReference>
<dbReference type="Gene3D" id="1.10.520.20">
    <property type="entry name" value="N-terminal domain of the delta subunit of the F1F0-ATP synthase"/>
    <property type="match status" value="1"/>
</dbReference>
<dbReference type="HAMAP" id="MF_01416">
    <property type="entry name" value="ATP_synth_delta_bact"/>
    <property type="match status" value="1"/>
</dbReference>
<dbReference type="InterPro" id="IPR026015">
    <property type="entry name" value="ATP_synth_OSCP/delta_N_sf"/>
</dbReference>
<dbReference type="InterPro" id="IPR000711">
    <property type="entry name" value="ATPase_OSCP/dsu"/>
</dbReference>
<dbReference type="NCBIfam" id="TIGR01145">
    <property type="entry name" value="ATP_synt_delta"/>
    <property type="match status" value="1"/>
</dbReference>
<dbReference type="NCBIfam" id="NF004406">
    <property type="entry name" value="PRK05758.3-2"/>
    <property type="match status" value="1"/>
</dbReference>
<dbReference type="PANTHER" id="PTHR11910">
    <property type="entry name" value="ATP SYNTHASE DELTA CHAIN"/>
    <property type="match status" value="1"/>
</dbReference>
<dbReference type="Pfam" id="PF00213">
    <property type="entry name" value="OSCP"/>
    <property type="match status" value="1"/>
</dbReference>
<dbReference type="PRINTS" id="PR00125">
    <property type="entry name" value="ATPASEDELTA"/>
</dbReference>
<dbReference type="SUPFAM" id="SSF47928">
    <property type="entry name" value="N-terminal domain of the delta subunit of the F1F0-ATP synthase"/>
    <property type="match status" value="1"/>
</dbReference>
<keyword id="KW-0066">ATP synthesis</keyword>
<keyword id="KW-0997">Cell inner membrane</keyword>
<keyword id="KW-1003">Cell membrane</keyword>
<keyword id="KW-0139">CF(1)</keyword>
<keyword id="KW-0375">Hydrogen ion transport</keyword>
<keyword id="KW-0406">Ion transport</keyword>
<keyword id="KW-0472">Membrane</keyword>
<keyword id="KW-0813">Transport</keyword>
<proteinExistence type="inferred from homology"/>
<reference key="1">
    <citation type="submission" date="2008-01" db="EMBL/GenBank/DDBJ databases">
        <title>Complete sequence of chromosome of Caulobacter sp. K31.</title>
        <authorList>
            <consortium name="US DOE Joint Genome Institute"/>
            <person name="Copeland A."/>
            <person name="Lucas S."/>
            <person name="Lapidus A."/>
            <person name="Barry K."/>
            <person name="Glavina del Rio T."/>
            <person name="Dalin E."/>
            <person name="Tice H."/>
            <person name="Pitluck S."/>
            <person name="Bruce D."/>
            <person name="Goodwin L."/>
            <person name="Thompson L.S."/>
            <person name="Brettin T."/>
            <person name="Detter J.C."/>
            <person name="Han C."/>
            <person name="Schmutz J."/>
            <person name="Larimer F."/>
            <person name="Land M."/>
            <person name="Hauser L."/>
            <person name="Kyrpides N."/>
            <person name="Kim E."/>
            <person name="Stephens C."/>
            <person name="Richardson P."/>
        </authorList>
    </citation>
    <scope>NUCLEOTIDE SEQUENCE [LARGE SCALE GENOMIC DNA]</scope>
    <source>
        <strain>K31</strain>
    </source>
</reference>
<feature type="chain" id="PRO_0000370933" description="ATP synthase subunit delta">
    <location>
        <begin position="1"/>
        <end position="184"/>
    </location>
</feature>
<organism>
    <name type="scientific">Caulobacter sp. (strain K31)</name>
    <dbReference type="NCBI Taxonomy" id="366602"/>
    <lineage>
        <taxon>Bacteria</taxon>
        <taxon>Pseudomonadati</taxon>
        <taxon>Pseudomonadota</taxon>
        <taxon>Alphaproteobacteria</taxon>
        <taxon>Caulobacterales</taxon>
        <taxon>Caulobacteraceae</taxon>
        <taxon>Caulobacter</taxon>
    </lineage>
</organism>
<gene>
    <name evidence="1" type="primary">atpH</name>
    <name type="ordered locus">Caul_4741</name>
</gene>
<sequence>MADETKATDAGQRYAQSLFELTIENNQLTKVEADLKSLRAMVAASTDLRRLLESPAFSAEDKAKGLTAVAAKAGFQLLTAKFLGLVASNGRAGDLMGAITAFVEMSAQHRGVVTAEVVTASALTAAQLKGVSTAVASALGKTPEISTRVDPSILGGIKVRVGSRLFDASLRSKLDSLKFALKRA</sequence>
<protein>
    <recommendedName>
        <fullName evidence="1">ATP synthase subunit delta</fullName>
    </recommendedName>
    <alternativeName>
        <fullName evidence="1">ATP synthase F(1) sector subunit delta</fullName>
    </alternativeName>
    <alternativeName>
        <fullName evidence="1">F-type ATPase subunit delta</fullName>
        <shortName evidence="1">F-ATPase subunit delta</shortName>
    </alternativeName>
</protein>